<keyword id="KW-0002">3D-structure</keyword>
<keyword id="KW-0007">Acetylation</keyword>
<keyword id="KW-0903">Direct protein sequencing</keyword>
<keyword id="KW-0349">Heme</keyword>
<keyword id="KW-0408">Iron</keyword>
<keyword id="KW-0479">Metal-binding</keyword>
<keyword id="KW-0561">Oxygen transport</keyword>
<keyword id="KW-0813">Transport</keyword>
<evidence type="ECO:0000255" key="1">
    <source>
        <dbReference type="PROSITE-ProRule" id="PRU00238"/>
    </source>
</evidence>
<evidence type="ECO:0000269" key="2">
    <source>
    </source>
</evidence>
<evidence type="ECO:0007829" key="3">
    <source>
        <dbReference type="PDB" id="1OUT"/>
    </source>
</evidence>
<reference key="1">
    <citation type="journal article" date="1978" name="Biochim. Biophys. Acta">
        <title>Primary structure of hemoglobin from trout (Salmo irideus). Amino acid sequence of alpha chain of Hb trout I.</title>
        <authorList>
            <person name="Bossa F."/>
            <person name="Barra D."/>
            <person name="Petruzzelli R."/>
            <person name="Martini F."/>
            <person name="Brunori M."/>
        </authorList>
    </citation>
    <scope>PROTEIN SEQUENCE</scope>
    <scope>ACETYLATION AT SER-1</scope>
</reference>
<reference key="2">
    <citation type="journal article" date="1996" name="J. Mol. Biol.">
        <title>The crystal structures of trout Hb I in the deoxy and carbonmonoxy forms.</title>
        <authorList>
            <person name="Tame J.R.H."/>
            <person name="Wilson J.C."/>
            <person name="Weber R.E."/>
        </authorList>
    </citation>
    <scope>X-RAY CRYSTALLOGRAPHY (2.3 ANGSTROMS)</scope>
</reference>
<proteinExistence type="evidence at protein level"/>
<protein>
    <recommendedName>
        <fullName>Hemoglobin subunit alpha-1</fullName>
    </recommendedName>
    <alternativeName>
        <fullName>Alpha-1-globin</fullName>
    </alternativeName>
    <alternativeName>
        <fullName>Hemoglobin alpha-1 chain</fullName>
    </alternativeName>
</protein>
<name>HBA1_ONCMY</name>
<accession>P02019</accession>
<feature type="chain" id="PRO_0000052758" description="Hemoglobin subunit alpha-1">
    <location>
        <begin position="1"/>
        <end position="144"/>
    </location>
</feature>
<feature type="domain" description="Globin" evidence="1">
    <location>
        <begin position="1"/>
        <end position="144"/>
    </location>
</feature>
<feature type="binding site" evidence="1">
    <location>
        <position position="61"/>
    </location>
    <ligand>
        <name>O2</name>
        <dbReference type="ChEBI" id="CHEBI:15379"/>
    </ligand>
</feature>
<feature type="binding site" description="proximal binding residue" evidence="1">
    <location>
        <position position="90"/>
    </location>
    <ligand>
        <name>heme b</name>
        <dbReference type="ChEBI" id="CHEBI:60344"/>
    </ligand>
    <ligandPart>
        <name>Fe</name>
        <dbReference type="ChEBI" id="CHEBI:18248"/>
    </ligandPart>
</feature>
<feature type="modified residue" description="N-acetylserine" evidence="2">
    <location>
        <position position="1"/>
    </location>
</feature>
<feature type="helix" evidence="3">
    <location>
        <begin position="4"/>
        <end position="17"/>
    </location>
</feature>
<feature type="helix" evidence="3">
    <location>
        <begin position="18"/>
        <end position="20"/>
    </location>
</feature>
<feature type="helix" evidence="3">
    <location>
        <begin position="21"/>
        <end position="31"/>
    </location>
</feature>
<feature type="helix" evidence="3">
    <location>
        <begin position="34"/>
        <end position="37"/>
    </location>
</feature>
<feature type="helix" evidence="3">
    <location>
        <begin position="39"/>
        <end position="45"/>
    </location>
</feature>
<feature type="helix" evidence="3">
    <location>
        <begin position="56"/>
        <end position="74"/>
    </location>
</feature>
<feature type="turn" evidence="3">
    <location>
        <begin position="75"/>
        <end position="77"/>
    </location>
</feature>
<feature type="helix" evidence="3">
    <location>
        <begin position="79"/>
        <end position="82"/>
    </location>
</feature>
<feature type="helix" evidence="3">
    <location>
        <begin position="84"/>
        <end position="92"/>
    </location>
</feature>
<feature type="helix" evidence="3">
    <location>
        <begin position="99"/>
        <end position="115"/>
    </location>
</feature>
<feature type="turn" evidence="3">
    <location>
        <begin position="117"/>
        <end position="119"/>
    </location>
</feature>
<feature type="helix" evidence="3">
    <location>
        <begin position="122"/>
        <end position="140"/>
    </location>
</feature>
<sequence>SLTAKDKSVVKAFWGKISGKADVVGAEALGRDKMLTAYPQTKTYFSHWADLSPGSGPVKKHGGIIMGAIGKAVGLMDDLVGGMSALSDLHAFKLRVDPGNFKILSHNILVTLAIHFPSDFTPEVHIAVDKFLAAVSAALADKYR</sequence>
<gene>
    <name type="primary">hba1</name>
</gene>
<organism>
    <name type="scientific">Oncorhynchus mykiss</name>
    <name type="common">Rainbow trout</name>
    <name type="synonym">Salmo gairdneri</name>
    <dbReference type="NCBI Taxonomy" id="8022"/>
    <lineage>
        <taxon>Eukaryota</taxon>
        <taxon>Metazoa</taxon>
        <taxon>Chordata</taxon>
        <taxon>Craniata</taxon>
        <taxon>Vertebrata</taxon>
        <taxon>Euteleostomi</taxon>
        <taxon>Actinopterygii</taxon>
        <taxon>Neopterygii</taxon>
        <taxon>Teleostei</taxon>
        <taxon>Protacanthopterygii</taxon>
        <taxon>Salmoniformes</taxon>
        <taxon>Salmonidae</taxon>
        <taxon>Salmoninae</taxon>
        <taxon>Oncorhynchus</taxon>
    </lineage>
</organism>
<comment type="function">
    <text>Involved in oxygen transport from gills to the various peripheral tissues.</text>
</comment>
<comment type="subunit">
    <text>Heterotetramer of two alpha chains and two beta chains.</text>
</comment>
<comment type="tissue specificity">
    <text>Red blood cells.</text>
</comment>
<comment type="miscellaneous">
    <text>This hemoglobin has two more residues, 32-Asp-Lys-33, than other fish hemoglobins.</text>
</comment>
<comment type="similarity">
    <text evidence="1">Belongs to the globin family.</text>
</comment>
<dbReference type="PIR" id="A02348">
    <property type="entry name" value="HATR1"/>
</dbReference>
<dbReference type="PDB" id="1OUT">
    <property type="method" value="X-ray"/>
    <property type="resolution" value="2.30 A"/>
    <property type="chains" value="A=1-143"/>
</dbReference>
<dbReference type="PDB" id="1OUU">
    <property type="method" value="X-ray"/>
    <property type="resolution" value="2.50 A"/>
    <property type="chains" value="A/C=1-143"/>
</dbReference>
<dbReference type="PDBsum" id="1OUT"/>
<dbReference type="PDBsum" id="1OUU"/>
<dbReference type="SMR" id="P02019"/>
<dbReference type="MINT" id="P02019"/>
<dbReference type="iPTMnet" id="P02019"/>
<dbReference type="EvolutionaryTrace" id="P02019"/>
<dbReference type="Proteomes" id="UP000694395">
    <property type="component" value="Unplaced"/>
</dbReference>
<dbReference type="GO" id="GO:0072562">
    <property type="term" value="C:blood microparticle"/>
    <property type="evidence" value="ECO:0007669"/>
    <property type="project" value="TreeGrafter"/>
</dbReference>
<dbReference type="GO" id="GO:0031838">
    <property type="term" value="C:haptoglobin-hemoglobin complex"/>
    <property type="evidence" value="ECO:0007669"/>
    <property type="project" value="TreeGrafter"/>
</dbReference>
<dbReference type="GO" id="GO:0005833">
    <property type="term" value="C:hemoglobin complex"/>
    <property type="evidence" value="ECO:0007669"/>
    <property type="project" value="InterPro"/>
</dbReference>
<dbReference type="GO" id="GO:0031720">
    <property type="term" value="F:haptoglobin binding"/>
    <property type="evidence" value="ECO:0007669"/>
    <property type="project" value="TreeGrafter"/>
</dbReference>
<dbReference type="GO" id="GO:0020037">
    <property type="term" value="F:heme binding"/>
    <property type="evidence" value="ECO:0007669"/>
    <property type="project" value="InterPro"/>
</dbReference>
<dbReference type="GO" id="GO:0046872">
    <property type="term" value="F:metal ion binding"/>
    <property type="evidence" value="ECO:0007669"/>
    <property type="project" value="UniProtKB-KW"/>
</dbReference>
<dbReference type="GO" id="GO:0043177">
    <property type="term" value="F:organic acid binding"/>
    <property type="evidence" value="ECO:0007669"/>
    <property type="project" value="TreeGrafter"/>
</dbReference>
<dbReference type="GO" id="GO:0019825">
    <property type="term" value="F:oxygen binding"/>
    <property type="evidence" value="ECO:0007669"/>
    <property type="project" value="InterPro"/>
</dbReference>
<dbReference type="GO" id="GO:0005344">
    <property type="term" value="F:oxygen carrier activity"/>
    <property type="evidence" value="ECO:0007669"/>
    <property type="project" value="UniProtKB-KW"/>
</dbReference>
<dbReference type="GO" id="GO:0004601">
    <property type="term" value="F:peroxidase activity"/>
    <property type="evidence" value="ECO:0007669"/>
    <property type="project" value="TreeGrafter"/>
</dbReference>
<dbReference type="GO" id="GO:0042744">
    <property type="term" value="P:hydrogen peroxide catabolic process"/>
    <property type="evidence" value="ECO:0007669"/>
    <property type="project" value="TreeGrafter"/>
</dbReference>
<dbReference type="CDD" id="cd08927">
    <property type="entry name" value="Hb-alpha-like"/>
    <property type="match status" value="1"/>
</dbReference>
<dbReference type="FunFam" id="1.10.490.10:FF:000002">
    <property type="entry name" value="Hemoglobin subunit alpha"/>
    <property type="match status" value="1"/>
</dbReference>
<dbReference type="Gene3D" id="1.10.490.10">
    <property type="entry name" value="Globins"/>
    <property type="match status" value="1"/>
</dbReference>
<dbReference type="InterPro" id="IPR000971">
    <property type="entry name" value="Globin"/>
</dbReference>
<dbReference type="InterPro" id="IPR009050">
    <property type="entry name" value="Globin-like_sf"/>
</dbReference>
<dbReference type="InterPro" id="IPR012292">
    <property type="entry name" value="Globin/Proto"/>
</dbReference>
<dbReference type="InterPro" id="IPR002338">
    <property type="entry name" value="Hemoglobin_a-typ"/>
</dbReference>
<dbReference type="InterPro" id="IPR050056">
    <property type="entry name" value="Hemoglobin_oxygen_transport"/>
</dbReference>
<dbReference type="PANTHER" id="PTHR11442:SF91">
    <property type="entry name" value="EMBRYONIC ALPHA GLOBIN E1-RELATED"/>
    <property type="match status" value="1"/>
</dbReference>
<dbReference type="PANTHER" id="PTHR11442">
    <property type="entry name" value="HEMOGLOBIN FAMILY MEMBER"/>
    <property type="match status" value="1"/>
</dbReference>
<dbReference type="Pfam" id="PF00042">
    <property type="entry name" value="Globin"/>
    <property type="match status" value="1"/>
</dbReference>
<dbReference type="PRINTS" id="PR00612">
    <property type="entry name" value="ALPHAHAEM"/>
</dbReference>
<dbReference type="SUPFAM" id="SSF46458">
    <property type="entry name" value="Globin-like"/>
    <property type="match status" value="1"/>
</dbReference>
<dbReference type="PROSITE" id="PS01033">
    <property type="entry name" value="GLOBIN"/>
    <property type="match status" value="1"/>
</dbReference>